<name>AROC_CHLTR</name>
<accession>O84373</accession>
<dbReference type="EC" id="4.2.3.5" evidence="1"/>
<dbReference type="EMBL" id="AE001273">
    <property type="protein sequence ID" value="AAC67964.1"/>
    <property type="molecule type" value="Genomic_DNA"/>
</dbReference>
<dbReference type="PIR" id="A71523">
    <property type="entry name" value="A71523"/>
</dbReference>
<dbReference type="RefSeq" id="NP_219877.1">
    <property type="nucleotide sequence ID" value="NC_000117.1"/>
</dbReference>
<dbReference type="RefSeq" id="WP_010725172.1">
    <property type="nucleotide sequence ID" value="NC_000117.1"/>
</dbReference>
<dbReference type="SMR" id="O84373"/>
<dbReference type="FunCoup" id="O84373">
    <property type="interactions" value="234"/>
</dbReference>
<dbReference type="STRING" id="272561.CT_368"/>
<dbReference type="EnsemblBacteria" id="AAC67964">
    <property type="protein sequence ID" value="AAC67964"/>
    <property type="gene ID" value="CT_368"/>
</dbReference>
<dbReference type="GeneID" id="884745"/>
<dbReference type="KEGG" id="ctr:CT_368"/>
<dbReference type="PATRIC" id="fig|272561.5.peg.397"/>
<dbReference type="HOGENOM" id="CLU_034547_0_0_0"/>
<dbReference type="InParanoid" id="O84373"/>
<dbReference type="OrthoDB" id="9771806at2"/>
<dbReference type="UniPathway" id="UPA00053">
    <property type="reaction ID" value="UER00090"/>
</dbReference>
<dbReference type="Proteomes" id="UP000000431">
    <property type="component" value="Chromosome"/>
</dbReference>
<dbReference type="GO" id="GO:0005829">
    <property type="term" value="C:cytosol"/>
    <property type="evidence" value="ECO:0000318"/>
    <property type="project" value="GO_Central"/>
</dbReference>
<dbReference type="GO" id="GO:0004107">
    <property type="term" value="F:chorismate synthase activity"/>
    <property type="evidence" value="ECO:0000318"/>
    <property type="project" value="GO_Central"/>
</dbReference>
<dbReference type="GO" id="GO:0010181">
    <property type="term" value="F:FMN binding"/>
    <property type="evidence" value="ECO:0000318"/>
    <property type="project" value="GO_Central"/>
</dbReference>
<dbReference type="GO" id="GO:0008652">
    <property type="term" value="P:amino acid biosynthetic process"/>
    <property type="evidence" value="ECO:0007669"/>
    <property type="project" value="UniProtKB-KW"/>
</dbReference>
<dbReference type="GO" id="GO:0009073">
    <property type="term" value="P:aromatic amino acid family biosynthetic process"/>
    <property type="evidence" value="ECO:0000318"/>
    <property type="project" value="GO_Central"/>
</dbReference>
<dbReference type="GO" id="GO:0009423">
    <property type="term" value="P:chorismate biosynthetic process"/>
    <property type="evidence" value="ECO:0000318"/>
    <property type="project" value="GO_Central"/>
</dbReference>
<dbReference type="CDD" id="cd07304">
    <property type="entry name" value="Chorismate_synthase"/>
    <property type="match status" value="1"/>
</dbReference>
<dbReference type="FunFam" id="3.60.150.10:FF:000002">
    <property type="entry name" value="Chorismate synthase"/>
    <property type="match status" value="1"/>
</dbReference>
<dbReference type="Gene3D" id="3.60.150.10">
    <property type="entry name" value="Chorismate synthase AroC"/>
    <property type="match status" value="1"/>
</dbReference>
<dbReference type="HAMAP" id="MF_00300">
    <property type="entry name" value="Chorismate_synth"/>
    <property type="match status" value="1"/>
</dbReference>
<dbReference type="InterPro" id="IPR000453">
    <property type="entry name" value="Chorismate_synth"/>
</dbReference>
<dbReference type="InterPro" id="IPR035904">
    <property type="entry name" value="Chorismate_synth_AroC_sf"/>
</dbReference>
<dbReference type="InterPro" id="IPR020541">
    <property type="entry name" value="Chorismate_synthase_CS"/>
</dbReference>
<dbReference type="NCBIfam" id="TIGR00033">
    <property type="entry name" value="aroC"/>
    <property type="match status" value="1"/>
</dbReference>
<dbReference type="NCBIfam" id="NF003793">
    <property type="entry name" value="PRK05382.1"/>
    <property type="match status" value="1"/>
</dbReference>
<dbReference type="PANTHER" id="PTHR21085">
    <property type="entry name" value="CHORISMATE SYNTHASE"/>
    <property type="match status" value="1"/>
</dbReference>
<dbReference type="PANTHER" id="PTHR21085:SF0">
    <property type="entry name" value="CHORISMATE SYNTHASE"/>
    <property type="match status" value="1"/>
</dbReference>
<dbReference type="Pfam" id="PF01264">
    <property type="entry name" value="Chorismate_synt"/>
    <property type="match status" value="1"/>
</dbReference>
<dbReference type="PIRSF" id="PIRSF001456">
    <property type="entry name" value="Chorismate_synth"/>
    <property type="match status" value="1"/>
</dbReference>
<dbReference type="SUPFAM" id="SSF103263">
    <property type="entry name" value="Chorismate synthase, AroC"/>
    <property type="match status" value="1"/>
</dbReference>
<dbReference type="PROSITE" id="PS00787">
    <property type="entry name" value="CHORISMATE_SYNTHASE_1"/>
    <property type="match status" value="1"/>
</dbReference>
<dbReference type="PROSITE" id="PS00788">
    <property type="entry name" value="CHORISMATE_SYNTHASE_2"/>
    <property type="match status" value="1"/>
</dbReference>
<dbReference type="PROSITE" id="PS00789">
    <property type="entry name" value="CHORISMATE_SYNTHASE_3"/>
    <property type="match status" value="1"/>
</dbReference>
<keyword id="KW-0028">Amino-acid biosynthesis</keyword>
<keyword id="KW-0057">Aromatic amino acid biosynthesis</keyword>
<keyword id="KW-0274">FAD</keyword>
<keyword id="KW-0285">Flavoprotein</keyword>
<keyword id="KW-0288">FMN</keyword>
<keyword id="KW-0456">Lyase</keyword>
<keyword id="KW-0521">NADP</keyword>
<keyword id="KW-1185">Reference proteome</keyword>
<organism>
    <name type="scientific">Chlamydia trachomatis serovar D (strain ATCC VR-885 / DSM 19411 / UW-3/Cx)</name>
    <dbReference type="NCBI Taxonomy" id="272561"/>
    <lineage>
        <taxon>Bacteria</taxon>
        <taxon>Pseudomonadati</taxon>
        <taxon>Chlamydiota</taxon>
        <taxon>Chlamydiia</taxon>
        <taxon>Chlamydiales</taxon>
        <taxon>Chlamydiaceae</taxon>
        <taxon>Chlamydia/Chlamydophila group</taxon>
        <taxon>Chlamydia</taxon>
    </lineage>
</organism>
<evidence type="ECO:0000255" key="1">
    <source>
        <dbReference type="HAMAP-Rule" id="MF_00300"/>
    </source>
</evidence>
<feature type="chain" id="PRO_0000140575" description="Chorismate synthase">
    <location>
        <begin position="1"/>
        <end position="357"/>
    </location>
</feature>
<feature type="binding site" evidence="1">
    <location>
        <position position="47"/>
    </location>
    <ligand>
        <name>NADP(+)</name>
        <dbReference type="ChEBI" id="CHEBI:58349"/>
    </ligand>
</feature>
<feature type="binding site" evidence="1">
    <location>
        <begin position="123"/>
        <end position="125"/>
    </location>
    <ligand>
        <name>FMN</name>
        <dbReference type="ChEBI" id="CHEBI:58210"/>
    </ligand>
</feature>
<feature type="binding site" evidence="1">
    <location>
        <position position="281"/>
    </location>
    <ligand>
        <name>FMN</name>
        <dbReference type="ChEBI" id="CHEBI:58210"/>
    </ligand>
</feature>
<feature type="binding site" evidence="1">
    <location>
        <begin position="296"/>
        <end position="300"/>
    </location>
    <ligand>
        <name>FMN</name>
        <dbReference type="ChEBI" id="CHEBI:58210"/>
    </ligand>
</feature>
<feature type="binding site" evidence="1">
    <location>
        <position position="324"/>
    </location>
    <ligand>
        <name>FMN</name>
        <dbReference type="ChEBI" id="CHEBI:58210"/>
    </ligand>
</feature>
<proteinExistence type="inferred from homology"/>
<gene>
    <name evidence="1" type="primary">aroC</name>
    <name type="ordered locus">CT_368</name>
</gene>
<comment type="function">
    <text evidence="1">Catalyzes the anti-1,4-elimination of the C-3 phosphate and the C-6 proR hydrogen from 5-enolpyruvylshikimate-3-phosphate (EPSP) to yield chorismate, which is the branch point compound that serves as the starting substrate for the three terminal pathways of aromatic amino acid biosynthesis. This reaction introduces a second double bond into the aromatic ring system.</text>
</comment>
<comment type="catalytic activity">
    <reaction evidence="1">
        <text>5-O-(1-carboxyvinyl)-3-phosphoshikimate = chorismate + phosphate</text>
        <dbReference type="Rhea" id="RHEA:21020"/>
        <dbReference type="ChEBI" id="CHEBI:29748"/>
        <dbReference type="ChEBI" id="CHEBI:43474"/>
        <dbReference type="ChEBI" id="CHEBI:57701"/>
        <dbReference type="EC" id="4.2.3.5"/>
    </reaction>
</comment>
<comment type="cofactor">
    <cofactor evidence="1">
        <name>FMNH2</name>
        <dbReference type="ChEBI" id="CHEBI:57618"/>
    </cofactor>
    <text evidence="1">Reduced FMN (FMNH(2)).</text>
</comment>
<comment type="pathway">
    <text evidence="1">Metabolic intermediate biosynthesis; chorismate biosynthesis; chorismate from D-erythrose 4-phosphate and phosphoenolpyruvate: step 7/7.</text>
</comment>
<comment type="subunit">
    <text evidence="1">Homotetramer.</text>
</comment>
<comment type="similarity">
    <text evidence="1">Belongs to the chorismate synthase family.</text>
</comment>
<sequence length="357" mass="38021">MHNQYGSIFSITTWGESHGPAIGVVIDGCPAGLSLSPEDFLPAMARRRPGQLHTSPRQEPDLVTILSGVYQNKTTGTPISLLIENKDVSSSSYEQLQHCYRPGHAQFAYEGKYGFADNRGGGRASARETASRVAAGVIAKKILLSQRIETLAFLSGFGTLESKNYPKLSDSLIQQVHTSPFYTLLPQEEIQNLLLLNPDDSFGGVVSFITSPLPIGLGEPVFGKLPALLAAAMMSIPAAKGFEIGAGFSSSQMTGSAYLDAFIADESGVSLQSNRCGGALGGISIGQPLEGRVAFKPTSSIKKPCSSVLKDGTLIAYRTPNQGRHDPCVAIRAVAVVEAMLDLTLVDLLLQHRCTQL</sequence>
<protein>
    <recommendedName>
        <fullName evidence="1">Chorismate synthase</fullName>
        <shortName evidence="1">CS</shortName>
        <ecNumber evidence="1">4.2.3.5</ecNumber>
    </recommendedName>
    <alternativeName>
        <fullName evidence="1">5-enolpyruvylshikimate-3-phosphate phospholyase</fullName>
    </alternativeName>
</protein>
<reference key="1">
    <citation type="journal article" date="1998" name="Science">
        <title>Genome sequence of an obligate intracellular pathogen of humans: Chlamydia trachomatis.</title>
        <authorList>
            <person name="Stephens R.S."/>
            <person name="Kalman S."/>
            <person name="Lammel C.J."/>
            <person name="Fan J."/>
            <person name="Marathe R."/>
            <person name="Aravind L."/>
            <person name="Mitchell W.P."/>
            <person name="Olinger L."/>
            <person name="Tatusov R.L."/>
            <person name="Zhao Q."/>
            <person name="Koonin E.V."/>
            <person name="Davis R.W."/>
        </authorList>
    </citation>
    <scope>NUCLEOTIDE SEQUENCE [LARGE SCALE GENOMIC DNA]</scope>
    <source>
        <strain>ATCC VR-885 / DSM 19411 / UW-3/Cx</strain>
    </source>
</reference>